<comment type="function">
    <text>Produces ATP from ADP in the presence of a proton gradient across the membrane. The V-type beta chain is a regulatory subunit.</text>
</comment>
<comment type="interaction">
    <interactant intactId="EBI-7260036">
        <id>Q56404</id>
    </interactant>
    <interactant intactId="EBI-7260009">
        <id>Q56403</id>
        <label>atpA</label>
    </interactant>
    <organismsDiffer>false</organismsDiffer>
    <experiments>2</experiments>
</comment>
<comment type="similarity">
    <text evidence="1">Belongs to the ATPase alpha/beta chains family.</text>
</comment>
<reference key="1">
    <citation type="journal article" date="1991" name="Biochim. Biophys. Acta">
        <title>Molecular cloning of genes encoding major two subunits of a eubacterial V-type ATPase from Thermus thermophilus.</title>
        <authorList>
            <person name="Tsutsumi S."/>
            <person name="Denda K."/>
            <person name="Yokoyama K."/>
            <person name="Oshima T."/>
            <person name="Date T."/>
            <person name="Yoshida M."/>
        </authorList>
    </citation>
    <scope>NUCLEOTIDE SEQUENCE [GENOMIC DNA]</scope>
</reference>
<reference key="2">
    <citation type="journal article" date="2000" name="J. Biol. Chem.">
        <title>V-type H+-ATPase/synthase from a thermophilic eubacterium, Thermus thermophilus. Subunit structure and operon.</title>
        <authorList>
            <person name="Yokoyama K."/>
            <person name="Ohkuma S."/>
            <person name="Taguchi H."/>
            <person name="Yasunaga T."/>
            <person name="Wakabayashi T."/>
            <person name="Yoshida M."/>
        </authorList>
    </citation>
    <scope>NUCLEOTIDE SEQUENCE [GENOMIC DNA]</scope>
</reference>
<reference key="3">
    <citation type="submission" date="2002-11" db="EMBL/GenBank/DDBJ databases">
        <authorList>
            <person name="Yokoyama K."/>
            <person name="Ohkuma S."/>
            <person name="Taguchi H."/>
            <person name="Yasunaga T."/>
            <person name="Wakabayashi T."/>
            <person name="Yoshida M."/>
        </authorList>
    </citation>
    <scope>SEQUENCE REVISION TO 75</scope>
</reference>
<reference key="4">
    <citation type="submission" date="2004-11" db="EMBL/GenBank/DDBJ databases">
        <title>Complete genome sequence of Thermus thermophilus HB8.</title>
        <authorList>
            <person name="Masui R."/>
            <person name="Kurokawa K."/>
            <person name="Nakagawa N."/>
            <person name="Tokunaga F."/>
            <person name="Koyama Y."/>
            <person name="Shibata T."/>
            <person name="Oshima T."/>
            <person name="Yokoyama S."/>
            <person name="Yasunaga T."/>
            <person name="Kuramitsu S."/>
        </authorList>
    </citation>
    <scope>NUCLEOTIDE SEQUENCE [LARGE SCALE GENOMIC DNA]</scope>
    <source>
        <strain>ATCC 27634 / DSM 579 / HB8</strain>
    </source>
</reference>
<organism>
    <name type="scientific">Thermus thermophilus (strain ATCC 27634 / DSM 579 / HB8)</name>
    <dbReference type="NCBI Taxonomy" id="300852"/>
    <lineage>
        <taxon>Bacteria</taxon>
        <taxon>Thermotogati</taxon>
        <taxon>Deinococcota</taxon>
        <taxon>Deinococci</taxon>
        <taxon>Thermales</taxon>
        <taxon>Thermaceae</taxon>
        <taxon>Thermus</taxon>
    </lineage>
</organism>
<protein>
    <recommendedName>
        <fullName>V-type ATP synthase beta chain</fullName>
    </recommendedName>
    <alternativeName>
        <fullName>V-ATPase subunit B</fullName>
    </alternativeName>
</protein>
<evidence type="ECO:0000305" key="1"/>
<evidence type="ECO:0007829" key="2">
    <source>
        <dbReference type="PDB" id="3GQB"/>
    </source>
</evidence>
<evidence type="ECO:0007829" key="3">
    <source>
        <dbReference type="PDB" id="6LY8"/>
    </source>
</evidence>
<evidence type="ECO:0007829" key="4">
    <source>
        <dbReference type="PDB" id="6QUM"/>
    </source>
</evidence>
<name>VATB_THET8</name>
<keyword id="KW-0002">3D-structure</keyword>
<keyword id="KW-0066">ATP synthesis</keyword>
<keyword id="KW-0375">Hydrogen ion transport</keyword>
<keyword id="KW-0406">Ion transport</keyword>
<keyword id="KW-1185">Reference proteome</keyword>
<keyword id="KW-0813">Transport</keyword>
<dbReference type="EMBL" id="X63855">
    <property type="protein sequence ID" value="CAA45341.1"/>
    <property type="molecule type" value="Genomic_DNA"/>
</dbReference>
<dbReference type="EMBL" id="D63799">
    <property type="protein sequence ID" value="BAA09874.2"/>
    <property type="molecule type" value="Genomic_DNA"/>
</dbReference>
<dbReference type="EMBL" id="AP008226">
    <property type="protein sequence ID" value="BAD71095.1"/>
    <property type="molecule type" value="Genomic_DNA"/>
</dbReference>
<dbReference type="PIR" id="B56812">
    <property type="entry name" value="B56812"/>
</dbReference>
<dbReference type="RefSeq" id="WP_011173333.1">
    <property type="nucleotide sequence ID" value="NC_006461.1"/>
</dbReference>
<dbReference type="RefSeq" id="YP_144538.1">
    <property type="nucleotide sequence ID" value="NC_006461.1"/>
</dbReference>
<dbReference type="PDB" id="3A5C">
    <property type="method" value="X-ray"/>
    <property type="resolution" value="4.51 A"/>
    <property type="chains" value="D/E/F/L/M/N=1-478"/>
</dbReference>
<dbReference type="PDB" id="3A5D">
    <property type="method" value="X-ray"/>
    <property type="resolution" value="4.80 A"/>
    <property type="chains" value="D/E/F/L/M/N=1-478"/>
</dbReference>
<dbReference type="PDB" id="3GQB">
    <property type="method" value="X-ray"/>
    <property type="resolution" value="2.80 A"/>
    <property type="chains" value="B/D=1-464"/>
</dbReference>
<dbReference type="PDB" id="3J0J">
    <property type="method" value="EM"/>
    <property type="resolution" value="9.70 A"/>
    <property type="chains" value="D/E/F=1-478"/>
</dbReference>
<dbReference type="PDB" id="3W3A">
    <property type="method" value="X-ray"/>
    <property type="resolution" value="3.90 A"/>
    <property type="chains" value="D/E/F/L/M/N=7-463"/>
</dbReference>
<dbReference type="PDB" id="5GAR">
    <property type="method" value="EM"/>
    <property type="resolution" value="6.40 A"/>
    <property type="chains" value="D/E/F=7-463"/>
</dbReference>
<dbReference type="PDB" id="5GAS">
    <property type="method" value="EM"/>
    <property type="resolution" value="9.50 A"/>
    <property type="chains" value="D/E/F=7-463"/>
</dbReference>
<dbReference type="PDB" id="5TSJ">
    <property type="method" value="EM"/>
    <property type="resolution" value="8.70 A"/>
    <property type="chains" value="D/E/F=7-463"/>
</dbReference>
<dbReference type="PDB" id="5Y5X">
    <property type="method" value="EM"/>
    <property type="resolution" value="5.00 A"/>
    <property type="chains" value="D/E/F=1-478"/>
</dbReference>
<dbReference type="PDB" id="5Y5Y">
    <property type="method" value="EM"/>
    <property type="resolution" value="4.70 A"/>
    <property type="chains" value="D/E/F=1-478"/>
</dbReference>
<dbReference type="PDB" id="5Y5Z">
    <property type="method" value="EM"/>
    <property type="resolution" value="6.70 A"/>
    <property type="chains" value="D/E/F=1-478"/>
</dbReference>
<dbReference type="PDB" id="5Y60">
    <property type="method" value="EM"/>
    <property type="resolution" value="7.50 A"/>
    <property type="chains" value="D/E/F=1-478"/>
</dbReference>
<dbReference type="PDB" id="6LY8">
    <property type="method" value="EM"/>
    <property type="resolution" value="3.50 A"/>
    <property type="chains" value="D/E/F=1-478"/>
</dbReference>
<dbReference type="PDB" id="6QUM">
    <property type="method" value="EM"/>
    <property type="resolution" value="3.25 A"/>
    <property type="chains" value="D/E/F=1-478"/>
</dbReference>
<dbReference type="PDB" id="6R0W">
    <property type="method" value="EM"/>
    <property type="resolution" value="3.60 A"/>
    <property type="chains" value="D/E/F=1-478"/>
</dbReference>
<dbReference type="PDB" id="6R0Y">
    <property type="method" value="EM"/>
    <property type="resolution" value="3.90 A"/>
    <property type="chains" value="D/E/F=1-478"/>
</dbReference>
<dbReference type="PDB" id="6R0Z">
    <property type="method" value="EM"/>
    <property type="resolution" value="3.80 A"/>
    <property type="chains" value="D/E/F=1-478"/>
</dbReference>
<dbReference type="PDB" id="6R10">
    <property type="method" value="EM"/>
    <property type="resolution" value="4.30 A"/>
    <property type="chains" value="D/E/F=1-478"/>
</dbReference>
<dbReference type="PDB" id="7VAI">
    <property type="method" value="EM"/>
    <property type="resolution" value="3.10 A"/>
    <property type="chains" value="D/E/F=1-478"/>
</dbReference>
<dbReference type="PDB" id="7VAJ">
    <property type="method" value="EM"/>
    <property type="resolution" value="3.10 A"/>
    <property type="chains" value="D/E/F=1-478"/>
</dbReference>
<dbReference type="PDB" id="7VAK">
    <property type="method" value="EM"/>
    <property type="resolution" value="4.70 A"/>
    <property type="chains" value="D/E/F=1-478"/>
</dbReference>
<dbReference type="PDB" id="7VAL">
    <property type="method" value="EM"/>
    <property type="resolution" value="3.10 A"/>
    <property type="chains" value="D/E/F=1-478"/>
</dbReference>
<dbReference type="PDB" id="7VAM">
    <property type="method" value="EM"/>
    <property type="resolution" value="3.20 A"/>
    <property type="chains" value="D/E/F=1-478"/>
</dbReference>
<dbReference type="PDB" id="7VAN">
    <property type="method" value="EM"/>
    <property type="resolution" value="3.00 A"/>
    <property type="chains" value="D/E/F=1-478"/>
</dbReference>
<dbReference type="PDB" id="7VAO">
    <property type="method" value="EM"/>
    <property type="resolution" value="3.40 A"/>
    <property type="chains" value="D/E/F=1-478"/>
</dbReference>
<dbReference type="PDB" id="7VAP">
    <property type="method" value="EM"/>
    <property type="resolution" value="3.00 A"/>
    <property type="chains" value="D/E/F=1-478"/>
</dbReference>
<dbReference type="PDB" id="7VAQ">
    <property type="method" value="EM"/>
    <property type="resolution" value="3.60 A"/>
    <property type="chains" value="D/E/F=1-478"/>
</dbReference>
<dbReference type="PDB" id="7VAR">
    <property type="method" value="EM"/>
    <property type="resolution" value="2.90 A"/>
    <property type="chains" value="D/E/F=1-478"/>
</dbReference>
<dbReference type="PDB" id="7VAS">
    <property type="method" value="EM"/>
    <property type="resolution" value="3.00 A"/>
    <property type="chains" value="D/E/F=1-478"/>
</dbReference>
<dbReference type="PDB" id="7VAT">
    <property type="method" value="EM"/>
    <property type="resolution" value="3.20 A"/>
    <property type="chains" value="D/E/F=1-478"/>
</dbReference>
<dbReference type="PDB" id="7VAU">
    <property type="method" value="EM"/>
    <property type="resolution" value="3.30 A"/>
    <property type="chains" value="D/E/F=1-478"/>
</dbReference>
<dbReference type="PDB" id="7VAV">
    <property type="method" value="EM"/>
    <property type="resolution" value="2.80 A"/>
    <property type="chains" value="D/E/F=1-478"/>
</dbReference>
<dbReference type="PDB" id="7VAW">
    <property type="method" value="EM"/>
    <property type="resolution" value="2.70 A"/>
    <property type="chains" value="D/E/F=1-478"/>
</dbReference>
<dbReference type="PDB" id="7VAX">
    <property type="method" value="EM"/>
    <property type="resolution" value="2.90 A"/>
    <property type="chains" value="D/E/F=1-478"/>
</dbReference>
<dbReference type="PDB" id="7VAY">
    <property type="method" value="EM"/>
    <property type="resolution" value="3.30 A"/>
    <property type="chains" value="D/E/F=1-478"/>
</dbReference>
<dbReference type="PDB" id="7VB0">
    <property type="method" value="EM"/>
    <property type="resolution" value="3.60 A"/>
    <property type="chains" value="D/E/F=1-478"/>
</dbReference>
<dbReference type="PDB" id="8GXU">
    <property type="method" value="EM"/>
    <property type="resolution" value="2.50 A"/>
    <property type="chains" value="D/E/F=1-478"/>
</dbReference>
<dbReference type="PDB" id="8GXW">
    <property type="method" value="EM"/>
    <property type="resolution" value="2.70 A"/>
    <property type="chains" value="D/E/F=1-478"/>
</dbReference>
<dbReference type="PDB" id="8GXX">
    <property type="method" value="EM"/>
    <property type="resolution" value="3.00 A"/>
    <property type="chains" value="D/E/F=1-478"/>
</dbReference>
<dbReference type="PDB" id="8GXY">
    <property type="method" value="EM"/>
    <property type="resolution" value="2.80 A"/>
    <property type="chains" value="D/E/F=1-478"/>
</dbReference>
<dbReference type="PDB" id="8GXZ">
    <property type="method" value="EM"/>
    <property type="resolution" value="3.10 A"/>
    <property type="chains" value="D/E/F=1-478"/>
</dbReference>
<dbReference type="PDBsum" id="3A5C"/>
<dbReference type="PDBsum" id="3A5D"/>
<dbReference type="PDBsum" id="3GQB"/>
<dbReference type="PDBsum" id="3J0J"/>
<dbReference type="PDBsum" id="3W3A"/>
<dbReference type="PDBsum" id="5GAR"/>
<dbReference type="PDBsum" id="5GAS"/>
<dbReference type="PDBsum" id="5TSJ"/>
<dbReference type="PDBsum" id="5Y5X"/>
<dbReference type="PDBsum" id="5Y5Y"/>
<dbReference type="PDBsum" id="5Y5Z"/>
<dbReference type="PDBsum" id="5Y60"/>
<dbReference type="PDBsum" id="6LY8"/>
<dbReference type="PDBsum" id="6QUM"/>
<dbReference type="PDBsum" id="6R0W"/>
<dbReference type="PDBsum" id="6R0Y"/>
<dbReference type="PDBsum" id="6R0Z"/>
<dbReference type="PDBsum" id="6R10"/>
<dbReference type="PDBsum" id="7VAI"/>
<dbReference type="PDBsum" id="7VAJ"/>
<dbReference type="PDBsum" id="7VAK"/>
<dbReference type="PDBsum" id="7VAL"/>
<dbReference type="PDBsum" id="7VAM"/>
<dbReference type="PDBsum" id="7VAN"/>
<dbReference type="PDBsum" id="7VAO"/>
<dbReference type="PDBsum" id="7VAP"/>
<dbReference type="PDBsum" id="7VAQ"/>
<dbReference type="PDBsum" id="7VAR"/>
<dbReference type="PDBsum" id="7VAS"/>
<dbReference type="PDBsum" id="7VAT"/>
<dbReference type="PDBsum" id="7VAU"/>
<dbReference type="PDBsum" id="7VAV"/>
<dbReference type="PDBsum" id="7VAW"/>
<dbReference type="PDBsum" id="7VAX"/>
<dbReference type="PDBsum" id="7VAY"/>
<dbReference type="PDBsum" id="7VB0"/>
<dbReference type="PDBsum" id="8GXU"/>
<dbReference type="PDBsum" id="8GXW"/>
<dbReference type="PDBsum" id="8GXX"/>
<dbReference type="PDBsum" id="8GXY"/>
<dbReference type="PDBsum" id="8GXZ"/>
<dbReference type="EMDB" id="EMD-30014"/>
<dbReference type="EMDB" id="EMD-31312"/>
<dbReference type="EMDB" id="EMD-31841"/>
<dbReference type="EMDB" id="EMD-31842"/>
<dbReference type="EMDB" id="EMD-31843"/>
<dbReference type="EMDB" id="EMD-31844"/>
<dbReference type="EMDB" id="EMD-31845"/>
<dbReference type="EMDB" id="EMD-31846"/>
<dbReference type="EMDB" id="EMD-31847"/>
<dbReference type="EMDB" id="EMD-31848"/>
<dbReference type="EMDB" id="EMD-31849"/>
<dbReference type="EMDB" id="EMD-31850"/>
<dbReference type="EMDB" id="EMD-31851"/>
<dbReference type="EMDB" id="EMD-31852"/>
<dbReference type="EMDB" id="EMD-31853"/>
<dbReference type="EMDB" id="EMD-31854"/>
<dbReference type="EMDB" id="EMD-31855"/>
<dbReference type="EMDB" id="EMD-31856"/>
<dbReference type="EMDB" id="EMD-31857"/>
<dbReference type="EMDB" id="EMD-31858"/>
<dbReference type="EMDB" id="EMD-31859"/>
<dbReference type="EMDB" id="EMD-31860"/>
<dbReference type="EMDB" id="EMD-31861"/>
<dbReference type="EMDB" id="EMD-31862"/>
<dbReference type="EMDB" id="EMD-31863"/>
<dbReference type="EMDB" id="EMD-31864"/>
<dbReference type="EMDB" id="EMD-31865"/>
<dbReference type="EMDB" id="EMD-31866"/>
<dbReference type="EMDB" id="EMD-31867"/>
<dbReference type="EMDB" id="EMD-31868"/>
<dbReference type="EMDB" id="EMD-31869"/>
<dbReference type="EMDB" id="EMD-31870"/>
<dbReference type="EMDB" id="EMD-31871"/>
<dbReference type="EMDB" id="EMD-31872"/>
<dbReference type="EMDB" id="EMD-31873"/>
<dbReference type="EMDB" id="EMD-34362"/>
<dbReference type="EMDB" id="EMD-34363"/>
<dbReference type="EMDB" id="EMD-34364"/>
<dbReference type="EMDB" id="EMD-34365"/>
<dbReference type="EMDB" id="EMD-34366"/>
<dbReference type="EMDB" id="EMD-4640"/>
<dbReference type="EMDB" id="EMD-4699"/>
<dbReference type="EMDB" id="EMD-4700"/>
<dbReference type="EMDB" id="EMD-4702"/>
<dbReference type="EMDB" id="EMD-4703"/>
<dbReference type="EMDB" id="EMD-6810"/>
<dbReference type="EMDB" id="EMD-6811"/>
<dbReference type="EMDB" id="EMD-6812"/>
<dbReference type="EMDB" id="EMD-6813"/>
<dbReference type="SMR" id="Q56404"/>
<dbReference type="IntAct" id="Q56404">
    <property type="interactions" value="2"/>
</dbReference>
<dbReference type="MINT" id="Q56404"/>
<dbReference type="TCDB" id="3.A.2.2.1">
    <property type="family name" value="the h+- or na+-translocating f-type, v-type and a-type atpase (f-atpase) superfamily"/>
</dbReference>
<dbReference type="EnsemblBacteria" id="BAD71095">
    <property type="protein sequence ID" value="BAD71095"/>
    <property type="gene ID" value="BAD71095"/>
</dbReference>
<dbReference type="GeneID" id="3169042"/>
<dbReference type="KEGG" id="ttj:TTHA1272"/>
<dbReference type="PATRIC" id="fig|300852.9.peg.1251"/>
<dbReference type="eggNOG" id="COG1156">
    <property type="taxonomic scope" value="Bacteria"/>
</dbReference>
<dbReference type="HOGENOM" id="CLU_022916_0_0_0"/>
<dbReference type="PhylomeDB" id="Q56404"/>
<dbReference type="EvolutionaryTrace" id="Q56404"/>
<dbReference type="Proteomes" id="UP000000532">
    <property type="component" value="Chromosome"/>
</dbReference>
<dbReference type="GO" id="GO:0005524">
    <property type="term" value="F:ATP binding"/>
    <property type="evidence" value="ECO:0007669"/>
    <property type="project" value="UniProtKB-UniRule"/>
</dbReference>
<dbReference type="GO" id="GO:0046933">
    <property type="term" value="F:proton-transporting ATP synthase activity, rotational mechanism"/>
    <property type="evidence" value="ECO:0007669"/>
    <property type="project" value="UniProtKB-UniRule"/>
</dbReference>
<dbReference type="GO" id="GO:0042777">
    <property type="term" value="P:proton motive force-driven plasma membrane ATP synthesis"/>
    <property type="evidence" value="ECO:0007669"/>
    <property type="project" value="UniProtKB-UniRule"/>
</dbReference>
<dbReference type="CDD" id="cd18112">
    <property type="entry name" value="ATP-synt_V_A-type_beta_C"/>
    <property type="match status" value="1"/>
</dbReference>
<dbReference type="CDD" id="cd18118">
    <property type="entry name" value="ATP-synt_V_A-type_beta_N"/>
    <property type="match status" value="1"/>
</dbReference>
<dbReference type="CDD" id="cd01135">
    <property type="entry name" value="V_A-ATPase_B"/>
    <property type="match status" value="1"/>
</dbReference>
<dbReference type="Gene3D" id="3.40.50.12240">
    <property type="match status" value="1"/>
</dbReference>
<dbReference type="HAMAP" id="MF_00310">
    <property type="entry name" value="ATP_synth_B_arch"/>
    <property type="match status" value="1"/>
</dbReference>
<dbReference type="InterPro" id="IPR055190">
    <property type="entry name" value="ATP-synt_VA_C"/>
</dbReference>
<dbReference type="InterPro" id="IPR020003">
    <property type="entry name" value="ATPase_a/bsu_AS"/>
</dbReference>
<dbReference type="InterPro" id="IPR004100">
    <property type="entry name" value="ATPase_F1/V1/A1_a/bsu_N"/>
</dbReference>
<dbReference type="InterPro" id="IPR000194">
    <property type="entry name" value="ATPase_F1/V1/A1_a/bsu_nucl-bd"/>
</dbReference>
<dbReference type="InterPro" id="IPR027417">
    <property type="entry name" value="P-loop_NTPase"/>
</dbReference>
<dbReference type="InterPro" id="IPR022879">
    <property type="entry name" value="V-ATPase_su_B/beta"/>
</dbReference>
<dbReference type="NCBIfam" id="NF003235">
    <property type="entry name" value="PRK04196.1"/>
    <property type="match status" value="1"/>
</dbReference>
<dbReference type="PANTHER" id="PTHR43389">
    <property type="entry name" value="V-TYPE PROTON ATPASE SUBUNIT B"/>
    <property type="match status" value="1"/>
</dbReference>
<dbReference type="PANTHER" id="PTHR43389:SF4">
    <property type="entry name" value="V-TYPE PROTON ATPASE SUBUNIT B"/>
    <property type="match status" value="1"/>
</dbReference>
<dbReference type="Pfam" id="PF00006">
    <property type="entry name" value="ATP-synt_ab"/>
    <property type="match status" value="1"/>
</dbReference>
<dbReference type="Pfam" id="PF02874">
    <property type="entry name" value="ATP-synt_ab_N"/>
    <property type="match status" value="1"/>
</dbReference>
<dbReference type="Pfam" id="PF22919">
    <property type="entry name" value="ATP-synt_VA_C"/>
    <property type="match status" value="1"/>
</dbReference>
<dbReference type="PIRSF" id="PIRSF039114">
    <property type="entry name" value="V-ATPsynth_beta/V-ATPase_B"/>
    <property type="match status" value="1"/>
</dbReference>
<dbReference type="SUPFAM" id="SSF47917">
    <property type="entry name" value="C-terminal domain of alpha and beta subunits of F1 ATP synthase"/>
    <property type="match status" value="1"/>
</dbReference>
<dbReference type="SUPFAM" id="SSF52540">
    <property type="entry name" value="P-loop containing nucleoside triphosphate hydrolases"/>
    <property type="match status" value="1"/>
</dbReference>
<dbReference type="PROSITE" id="PS00152">
    <property type="entry name" value="ATPASE_ALPHA_BETA"/>
    <property type="match status" value="1"/>
</dbReference>
<proteinExistence type="evidence at protein level"/>
<accession>Q56404</accession>
<accession>Q5SIU2</accession>
<feature type="chain" id="PRO_0000144682" description="V-type ATP synthase beta chain">
    <location>
        <begin position="1"/>
        <end position="478"/>
    </location>
</feature>
<feature type="sequence conflict" description="In Ref. 1; CAA45341." evidence="1" ref="1">
    <original>L</original>
    <variation>W</variation>
    <location>
        <position position="75"/>
    </location>
</feature>
<feature type="strand" evidence="2">
    <location>
        <begin position="11"/>
        <end position="15"/>
    </location>
</feature>
<feature type="strand" evidence="2">
    <location>
        <begin position="18"/>
        <end position="23"/>
    </location>
</feature>
<feature type="strand" evidence="2">
    <location>
        <begin position="32"/>
        <end position="36"/>
    </location>
</feature>
<feature type="strand" evidence="3">
    <location>
        <begin position="38"/>
        <end position="40"/>
    </location>
</feature>
<feature type="strand" evidence="2">
    <location>
        <begin position="42"/>
        <end position="61"/>
    </location>
</feature>
<feature type="strand" evidence="2">
    <location>
        <begin position="68"/>
        <end position="70"/>
    </location>
</feature>
<feature type="strand" evidence="2">
    <location>
        <begin position="72"/>
        <end position="79"/>
    </location>
</feature>
<feature type="strand" evidence="2">
    <location>
        <begin position="81"/>
        <end position="84"/>
    </location>
</feature>
<feature type="turn" evidence="2">
    <location>
        <begin position="87"/>
        <end position="90"/>
    </location>
</feature>
<feature type="strand" evidence="2">
    <location>
        <begin position="91"/>
        <end position="94"/>
    </location>
</feature>
<feature type="turn" evidence="3">
    <location>
        <begin position="95"/>
        <end position="97"/>
    </location>
</feature>
<feature type="strand" evidence="2">
    <location>
        <begin position="101"/>
        <end position="103"/>
    </location>
</feature>
<feature type="strand" evidence="2">
    <location>
        <begin position="109"/>
        <end position="113"/>
    </location>
</feature>
<feature type="helix" evidence="2">
    <location>
        <begin position="121"/>
        <end position="123"/>
    </location>
</feature>
<feature type="strand" evidence="3">
    <location>
        <begin position="130"/>
        <end position="132"/>
    </location>
</feature>
<feature type="helix" evidence="2">
    <location>
        <begin position="136"/>
        <end position="139"/>
    </location>
</feature>
<feature type="strand" evidence="2">
    <location>
        <begin position="152"/>
        <end position="155"/>
    </location>
</feature>
<feature type="strand" evidence="4">
    <location>
        <begin position="156"/>
        <end position="158"/>
    </location>
</feature>
<feature type="helix" evidence="2">
    <location>
        <begin position="160"/>
        <end position="170"/>
    </location>
</feature>
<feature type="helix" evidence="2">
    <location>
        <begin position="175"/>
        <end position="178"/>
    </location>
</feature>
<feature type="helix" evidence="3">
    <location>
        <begin position="182"/>
        <end position="184"/>
    </location>
</feature>
<feature type="strand" evidence="2">
    <location>
        <begin position="187"/>
        <end position="196"/>
    </location>
</feature>
<feature type="helix" evidence="2">
    <location>
        <begin position="198"/>
        <end position="210"/>
    </location>
</feature>
<feature type="helix" evidence="2">
    <location>
        <begin position="213"/>
        <end position="216"/>
    </location>
</feature>
<feature type="strand" evidence="2">
    <location>
        <begin position="217"/>
        <end position="223"/>
    </location>
</feature>
<feature type="strand" evidence="4">
    <location>
        <begin position="224"/>
        <end position="226"/>
    </location>
</feature>
<feature type="helix" evidence="2">
    <location>
        <begin position="229"/>
        <end position="247"/>
    </location>
</feature>
<feature type="strand" evidence="2">
    <location>
        <begin position="252"/>
        <end position="258"/>
    </location>
</feature>
<feature type="helix" evidence="2">
    <location>
        <begin position="260"/>
        <end position="272"/>
    </location>
</feature>
<feature type="turn" evidence="2">
    <location>
        <begin position="273"/>
        <end position="275"/>
    </location>
</feature>
<feature type="helix" evidence="2">
    <location>
        <begin position="280"/>
        <end position="282"/>
    </location>
</feature>
<feature type="helix" evidence="2">
    <location>
        <begin position="287"/>
        <end position="295"/>
    </location>
</feature>
<feature type="strand" evidence="3">
    <location>
        <begin position="301"/>
        <end position="303"/>
    </location>
</feature>
<feature type="strand" evidence="2">
    <location>
        <begin position="307"/>
        <end position="316"/>
    </location>
</feature>
<feature type="strand" evidence="3">
    <location>
        <begin position="321"/>
        <end position="323"/>
    </location>
</feature>
<feature type="helix" evidence="2">
    <location>
        <begin position="324"/>
        <end position="332"/>
    </location>
</feature>
<feature type="strand" evidence="2">
    <location>
        <begin position="333"/>
        <end position="339"/>
    </location>
</feature>
<feature type="helix" evidence="2">
    <location>
        <begin position="341"/>
        <end position="345"/>
    </location>
</feature>
<feature type="turn" evidence="2">
    <location>
        <begin position="354"/>
        <end position="356"/>
    </location>
</feature>
<feature type="helix" evidence="2">
    <location>
        <begin position="362"/>
        <end position="364"/>
    </location>
</feature>
<feature type="turn" evidence="2">
    <location>
        <begin position="368"/>
        <end position="370"/>
    </location>
</feature>
<feature type="helix" evidence="2">
    <location>
        <begin position="375"/>
        <end position="395"/>
    </location>
</feature>
<feature type="strand" evidence="2">
    <location>
        <begin position="397"/>
        <end position="399"/>
    </location>
</feature>
<feature type="helix" evidence="2">
    <location>
        <begin position="407"/>
        <end position="410"/>
    </location>
</feature>
<feature type="helix" evidence="2">
    <location>
        <begin position="413"/>
        <end position="420"/>
    </location>
</feature>
<feature type="turn" evidence="2">
    <location>
        <begin position="421"/>
        <end position="423"/>
    </location>
</feature>
<feature type="helix" evidence="2">
    <location>
        <begin position="432"/>
        <end position="443"/>
    </location>
</feature>
<feature type="helix" evidence="2">
    <location>
        <begin position="448"/>
        <end position="450"/>
    </location>
</feature>
<feature type="helix" evidence="2">
    <location>
        <begin position="456"/>
        <end position="462"/>
    </location>
</feature>
<feature type="helix" evidence="4">
    <location>
        <begin position="467"/>
        <end position="470"/>
    </location>
</feature>
<gene>
    <name type="primary">atpB</name>
    <name type="ordered locus">TTHA1272</name>
</gene>
<sequence>MDLLKKEYTGITYISGPLLFVENAKDLAYGAIVDIKDGTGRVRGGQVIEVSEEYAVIQVFEETTGLDLATTSVSLVEDVARLGVSKEMLGRRFNGIGKPIDGLPPITPEKRLPITGLPLNPVARRKPEQFIQTGISTIDVMNTLVRGQKLPIFSGSGLPANEIAAQIARQATVRPDLSGEGEKEEPFAVVFAAMGITQRELSYFIQEFERTGALSRSVLFLNKADDPTIERILTPRMALTVAEYLAFEHDYHVLVILTDMTNYCEALREIGAAREEIPGRRGYPGYMYTDLATIYERAGVVEGKKGSVTQIPILSMPDDDRTHPIPDLTGYITEGQIQLSRELHRKGIYPPIDPLPSLSRLMNNGVGKGKTREDHKQVSDQLYSAYANGVDIRKLVAIIGEDALTENDRRYLQFADAFERFFINQGQQNRSIEESLQIAWALLSMLPQGELKRISKDHIGKYYGQKLEEIWGAPQALD</sequence>